<reference key="1">
    <citation type="journal article" date="2007" name="Nat. Biotechnol.">
        <title>Genome sequencing and analysis of the versatile cell factory Aspergillus niger CBS 513.88.</title>
        <authorList>
            <person name="Pel H.J."/>
            <person name="de Winde J.H."/>
            <person name="Archer D.B."/>
            <person name="Dyer P.S."/>
            <person name="Hofmann G."/>
            <person name="Schaap P.J."/>
            <person name="Turner G."/>
            <person name="de Vries R.P."/>
            <person name="Albang R."/>
            <person name="Albermann K."/>
            <person name="Andersen M.R."/>
            <person name="Bendtsen J.D."/>
            <person name="Benen J.A.E."/>
            <person name="van den Berg M."/>
            <person name="Breestraat S."/>
            <person name="Caddick M.X."/>
            <person name="Contreras R."/>
            <person name="Cornell M."/>
            <person name="Coutinho P.M."/>
            <person name="Danchin E.G.J."/>
            <person name="Debets A.J.M."/>
            <person name="Dekker P."/>
            <person name="van Dijck P.W.M."/>
            <person name="van Dijk A."/>
            <person name="Dijkhuizen L."/>
            <person name="Driessen A.J.M."/>
            <person name="d'Enfert C."/>
            <person name="Geysens S."/>
            <person name="Goosen C."/>
            <person name="Groot G.S.P."/>
            <person name="de Groot P.W.J."/>
            <person name="Guillemette T."/>
            <person name="Henrissat B."/>
            <person name="Herweijer M."/>
            <person name="van den Hombergh J.P.T.W."/>
            <person name="van den Hondel C.A.M.J.J."/>
            <person name="van der Heijden R.T.J.M."/>
            <person name="van der Kaaij R.M."/>
            <person name="Klis F.M."/>
            <person name="Kools H.J."/>
            <person name="Kubicek C.P."/>
            <person name="van Kuyk P.A."/>
            <person name="Lauber J."/>
            <person name="Lu X."/>
            <person name="van der Maarel M.J.E.C."/>
            <person name="Meulenberg R."/>
            <person name="Menke H."/>
            <person name="Mortimer M.A."/>
            <person name="Nielsen J."/>
            <person name="Oliver S.G."/>
            <person name="Olsthoorn M."/>
            <person name="Pal K."/>
            <person name="van Peij N.N.M.E."/>
            <person name="Ram A.F.J."/>
            <person name="Rinas U."/>
            <person name="Roubos J.A."/>
            <person name="Sagt C.M.J."/>
            <person name="Schmoll M."/>
            <person name="Sun J."/>
            <person name="Ussery D."/>
            <person name="Varga J."/>
            <person name="Vervecken W."/>
            <person name="van de Vondervoort P.J.J."/>
            <person name="Wedler H."/>
            <person name="Woesten H.A.B."/>
            <person name="Zeng A.-P."/>
            <person name="van Ooyen A.J.J."/>
            <person name="Visser J."/>
            <person name="Stam H."/>
        </authorList>
    </citation>
    <scope>NUCLEOTIDE SEQUENCE [LARGE SCALE GENOMIC DNA]</scope>
    <source>
        <strain>ATCC MYA-4892 / CBS 513.88 / FGSC A1513</strain>
    </source>
</reference>
<comment type="function">
    <text evidence="1">Component of the NOP7 complex, which is required for maturation of the 25S and 5.8S ribosomal RNAs and formation of the 60S ribosome.</text>
</comment>
<comment type="subunit">
    <text evidence="1">Component of the NOP7 complex, composed of erb1, nop7 and ytm1. The complex is held together by erb1, which interacts with nop7 via its N-terminal domain and with ytm1 via a high-affinity interaction between the seven-bladed beta-propeller domains of the 2 proteins. The NOP7 complex associates with the 66S pre-ribosome. Interacts (via UBL domain) with mdn1 (via VWFA/MIDAS domain).</text>
</comment>
<comment type="subcellular location">
    <subcellularLocation>
        <location evidence="1">Nucleus</location>
        <location evidence="1">Nucleolus</location>
    </subcellularLocation>
    <subcellularLocation>
        <location evidence="1">Nucleus</location>
        <location evidence="1">Nucleoplasm</location>
    </subcellularLocation>
</comment>
<comment type="similarity">
    <text evidence="1">Belongs to the WD repeat WDR12/YTM1 family.</text>
</comment>
<gene>
    <name type="primary">ytm1</name>
    <name type="ORF">An04g02000</name>
</gene>
<sequence length="490" mass="52242">MNGVQDSTSAAASSQSAQRQVRVQLVSKQEDIALPESTGPILVPTGLRRYALSTLVNNLLGNDKPVPFEFLINGAFLRTSIDEYLTANGISAETTLEIEYIRALIPPLHIASFEHDDWVGSVDVLSATSLATSWASAVVSPGQERILSGSYDGLLRVWNMSSQIVATSPSPADGGHGASIKAAKFISPNSIVSAGLDRTVRLWKYNESDDGFSGKITPQIELYGHKSGINSLAVHAPSNRILSASSDHSIGFWSTKKSDAPAAPENLVPSAASRSSKRRKVSSSVSIPQRGPLALLSSHTAPVSAAIFDTNDSTVGYSTSWDHSLRTWDLVTAALVDTRSTSHSLLSLEHLPEHHLLATGTSARHITLIDPRTSATTISAMTLRGHTNAVVSLSRDPHSSYGLISGSHDGTCRIWDIRATKTDNDGVVGESVYSITRRSLEEQGKADAKRVGGEGVKVFSVCWDRSVGIVSAGEDKRIQINRGEGVLSSA</sequence>
<keyword id="KW-0539">Nucleus</keyword>
<keyword id="KW-1185">Reference proteome</keyword>
<keyword id="KW-0677">Repeat</keyword>
<keyword id="KW-0690">Ribosome biogenesis</keyword>
<keyword id="KW-0698">rRNA processing</keyword>
<keyword id="KW-0853">WD repeat</keyword>
<proteinExistence type="inferred from homology"/>
<protein>
    <recommendedName>
        <fullName evidence="1">Ribosome biogenesis protein ytm1</fullName>
    </recommendedName>
</protein>
<accession>A2QI22</accession>
<feature type="chain" id="PRO_0000369577" description="Ribosome biogenesis protein ytm1">
    <location>
        <begin position="1"/>
        <end position="490"/>
    </location>
</feature>
<feature type="repeat" description="WD 1">
    <location>
        <begin position="129"/>
        <end position="168"/>
    </location>
</feature>
<feature type="repeat" description="WD 2">
    <location>
        <begin position="175"/>
        <end position="213"/>
    </location>
</feature>
<feature type="repeat" description="WD 3">
    <location>
        <begin position="224"/>
        <end position="263"/>
    </location>
</feature>
<feature type="repeat" description="WD 4">
    <location>
        <begin position="298"/>
        <end position="338"/>
    </location>
</feature>
<feature type="repeat" description="WD 5">
    <location>
        <begin position="340"/>
        <end position="379"/>
    </location>
</feature>
<feature type="repeat" description="WD 6">
    <location>
        <begin position="385"/>
        <end position="425"/>
    </location>
</feature>
<feature type="repeat" description="WD 7">
    <location>
        <begin position="453"/>
        <end position="490"/>
    </location>
</feature>
<feature type="region of interest" description="Ubiquitin-like (UBL) domain" evidence="1">
    <location>
        <begin position="21"/>
        <end position="102"/>
    </location>
</feature>
<feature type="region of interest" description="Disordered" evidence="2">
    <location>
        <begin position="257"/>
        <end position="285"/>
    </location>
</feature>
<dbReference type="EMBL" id="AM270071">
    <property type="protein sequence ID" value="CAL00687.1"/>
    <property type="molecule type" value="Genomic_DNA"/>
</dbReference>
<dbReference type="RefSeq" id="XP_001401568.1">
    <property type="nucleotide sequence ID" value="XM_001401531.1"/>
</dbReference>
<dbReference type="SMR" id="A2QI22"/>
<dbReference type="EnsemblFungi" id="CAL00687">
    <property type="protein sequence ID" value="CAL00687"/>
    <property type="gene ID" value="An04g02000"/>
</dbReference>
<dbReference type="GeneID" id="4990605"/>
<dbReference type="KEGG" id="ang:An04g02000"/>
<dbReference type="VEuPathDB" id="FungiDB:An04g02000"/>
<dbReference type="HOGENOM" id="CLU_000288_57_0_1"/>
<dbReference type="Proteomes" id="UP000006706">
    <property type="component" value="Chromosome 6L"/>
</dbReference>
<dbReference type="GO" id="GO:0005654">
    <property type="term" value="C:nucleoplasm"/>
    <property type="evidence" value="ECO:0007669"/>
    <property type="project" value="UniProtKB-SubCell"/>
</dbReference>
<dbReference type="GO" id="GO:0070545">
    <property type="term" value="C:PeBoW complex"/>
    <property type="evidence" value="ECO:0007669"/>
    <property type="project" value="EnsemblFungi"/>
</dbReference>
<dbReference type="GO" id="GO:0030687">
    <property type="term" value="C:preribosome, large subunit precursor"/>
    <property type="evidence" value="ECO:0007669"/>
    <property type="project" value="UniProtKB-UniRule"/>
</dbReference>
<dbReference type="GO" id="GO:0043021">
    <property type="term" value="F:ribonucleoprotein complex binding"/>
    <property type="evidence" value="ECO:0007669"/>
    <property type="project" value="UniProtKB-UniRule"/>
</dbReference>
<dbReference type="GO" id="GO:0051276">
    <property type="term" value="P:chromosome organization"/>
    <property type="evidence" value="ECO:0007669"/>
    <property type="project" value="EnsemblFungi"/>
</dbReference>
<dbReference type="GO" id="GO:0000466">
    <property type="term" value="P:maturation of 5.8S rRNA from tricistronic rRNA transcript (SSU-rRNA, 5.8S rRNA, LSU-rRNA)"/>
    <property type="evidence" value="ECO:0007669"/>
    <property type="project" value="UniProtKB-UniRule"/>
</dbReference>
<dbReference type="GO" id="GO:0000463">
    <property type="term" value="P:maturation of LSU-rRNA from tricistronic rRNA transcript (SSU-rRNA, 5.8S rRNA, LSU-rRNA)"/>
    <property type="evidence" value="ECO:0007669"/>
    <property type="project" value="UniProtKB-UniRule"/>
</dbReference>
<dbReference type="GO" id="GO:0110136">
    <property type="term" value="P:protein-RNA complex remodeling"/>
    <property type="evidence" value="ECO:0007669"/>
    <property type="project" value="EnsemblFungi"/>
</dbReference>
<dbReference type="FunFam" id="2.130.10.10:FF:000593">
    <property type="entry name" value="Ribosome biogenesis protein ytm1"/>
    <property type="match status" value="1"/>
</dbReference>
<dbReference type="Gene3D" id="2.130.10.10">
    <property type="entry name" value="YVTN repeat-like/Quinoprotein amine dehydrogenase"/>
    <property type="match status" value="1"/>
</dbReference>
<dbReference type="HAMAP" id="MF_03029">
    <property type="entry name" value="WDR12"/>
    <property type="match status" value="1"/>
</dbReference>
<dbReference type="InterPro" id="IPR020472">
    <property type="entry name" value="G-protein_beta_WD-40_rep"/>
</dbReference>
<dbReference type="InterPro" id="IPR012972">
    <property type="entry name" value="NLE"/>
</dbReference>
<dbReference type="InterPro" id="IPR015943">
    <property type="entry name" value="WD40/YVTN_repeat-like_dom_sf"/>
</dbReference>
<dbReference type="InterPro" id="IPR019775">
    <property type="entry name" value="WD40_repeat_CS"/>
</dbReference>
<dbReference type="InterPro" id="IPR036322">
    <property type="entry name" value="WD40_repeat_dom_sf"/>
</dbReference>
<dbReference type="InterPro" id="IPR001680">
    <property type="entry name" value="WD40_rpt"/>
</dbReference>
<dbReference type="InterPro" id="IPR028599">
    <property type="entry name" value="WDR12/Ytm1"/>
</dbReference>
<dbReference type="PANTHER" id="PTHR19855:SF11">
    <property type="entry name" value="RIBOSOME BIOGENESIS PROTEIN WDR12"/>
    <property type="match status" value="1"/>
</dbReference>
<dbReference type="PANTHER" id="PTHR19855">
    <property type="entry name" value="WD40 REPEAT PROTEIN 12, 37"/>
    <property type="match status" value="1"/>
</dbReference>
<dbReference type="Pfam" id="PF08154">
    <property type="entry name" value="NLE"/>
    <property type="match status" value="1"/>
</dbReference>
<dbReference type="Pfam" id="PF00400">
    <property type="entry name" value="WD40"/>
    <property type="match status" value="5"/>
</dbReference>
<dbReference type="PRINTS" id="PR00320">
    <property type="entry name" value="GPROTEINBRPT"/>
</dbReference>
<dbReference type="SMART" id="SM00320">
    <property type="entry name" value="WD40"/>
    <property type="match status" value="7"/>
</dbReference>
<dbReference type="SUPFAM" id="SSF50978">
    <property type="entry name" value="WD40 repeat-like"/>
    <property type="match status" value="1"/>
</dbReference>
<dbReference type="PROSITE" id="PS00678">
    <property type="entry name" value="WD_REPEATS_1"/>
    <property type="match status" value="2"/>
</dbReference>
<dbReference type="PROSITE" id="PS50082">
    <property type="entry name" value="WD_REPEATS_2"/>
    <property type="match status" value="5"/>
</dbReference>
<dbReference type="PROSITE" id="PS50294">
    <property type="entry name" value="WD_REPEATS_REGION"/>
    <property type="match status" value="1"/>
</dbReference>
<name>YTM1_ASPNC</name>
<organism>
    <name type="scientific">Aspergillus niger (strain ATCC MYA-4892 / CBS 513.88 / FGSC A1513)</name>
    <dbReference type="NCBI Taxonomy" id="425011"/>
    <lineage>
        <taxon>Eukaryota</taxon>
        <taxon>Fungi</taxon>
        <taxon>Dikarya</taxon>
        <taxon>Ascomycota</taxon>
        <taxon>Pezizomycotina</taxon>
        <taxon>Eurotiomycetes</taxon>
        <taxon>Eurotiomycetidae</taxon>
        <taxon>Eurotiales</taxon>
        <taxon>Aspergillaceae</taxon>
        <taxon>Aspergillus</taxon>
        <taxon>Aspergillus subgen. Circumdati</taxon>
    </lineage>
</organism>
<evidence type="ECO:0000255" key="1">
    <source>
        <dbReference type="HAMAP-Rule" id="MF_03029"/>
    </source>
</evidence>
<evidence type="ECO:0000256" key="2">
    <source>
        <dbReference type="SAM" id="MobiDB-lite"/>
    </source>
</evidence>